<name>KEFF_ECOLC</name>
<keyword id="KW-0997">Cell inner membrane</keyword>
<keyword id="KW-1003">Cell membrane</keyword>
<keyword id="KW-0285">Flavoprotein</keyword>
<keyword id="KW-0288">FMN</keyword>
<keyword id="KW-0472">Membrane</keyword>
<keyword id="KW-0520">NAD</keyword>
<keyword id="KW-0560">Oxidoreductase</keyword>
<protein>
    <recommendedName>
        <fullName evidence="1">Glutathione-regulated potassium-efflux system ancillary protein KefF</fullName>
    </recommendedName>
    <alternativeName>
        <fullName evidence="1">Quinone oxidoreductase KefF</fullName>
        <ecNumber evidence="1">1.6.5.2</ecNumber>
    </alternativeName>
</protein>
<evidence type="ECO:0000255" key="1">
    <source>
        <dbReference type="HAMAP-Rule" id="MF_01414"/>
    </source>
</evidence>
<accession>B1IRD0</accession>
<proteinExistence type="inferred from homology"/>
<sequence>MILIIYAHPYPHHSHANKRMLEQARTLEGVEIRSLYQLYPDFNIDIAAEQEALSRADLIVWQHPMQWYSIPPLLKLWIDKVLSHGWAYGHGGKALHGKHLLWAVTTGGGESHFEIGAHPGFDVLSQPLQATAIYCGLNWLPPFAMHCTFICDDETLEGQARHYKQRLLEWQEAHHG</sequence>
<dbReference type="EC" id="1.6.5.2" evidence="1"/>
<dbReference type="EMBL" id="CP000946">
    <property type="protein sequence ID" value="ACA79223.1"/>
    <property type="molecule type" value="Genomic_DNA"/>
</dbReference>
<dbReference type="RefSeq" id="WP_000600735.1">
    <property type="nucleotide sequence ID" value="NZ_MTFT01000035.1"/>
</dbReference>
<dbReference type="SMR" id="B1IRD0"/>
<dbReference type="KEGG" id="ecl:EcolC_3609"/>
<dbReference type="HOGENOM" id="CLU_058643_0_2_6"/>
<dbReference type="GO" id="GO:0005886">
    <property type="term" value="C:plasma membrane"/>
    <property type="evidence" value="ECO:0007669"/>
    <property type="project" value="UniProtKB-SubCell"/>
</dbReference>
<dbReference type="GO" id="GO:0009055">
    <property type="term" value="F:electron transfer activity"/>
    <property type="evidence" value="ECO:0007669"/>
    <property type="project" value="TreeGrafter"/>
</dbReference>
<dbReference type="GO" id="GO:0010181">
    <property type="term" value="F:FMN binding"/>
    <property type="evidence" value="ECO:0007669"/>
    <property type="project" value="UniProtKB-UniRule"/>
</dbReference>
<dbReference type="GO" id="GO:0050136">
    <property type="term" value="F:NADH:ubiquinone reductase (non-electrogenic) activity"/>
    <property type="evidence" value="ECO:0007669"/>
    <property type="project" value="RHEA"/>
</dbReference>
<dbReference type="GO" id="GO:0008753">
    <property type="term" value="F:NADPH dehydrogenase (quinone) activity"/>
    <property type="evidence" value="ECO:0007669"/>
    <property type="project" value="RHEA"/>
</dbReference>
<dbReference type="GO" id="GO:1901381">
    <property type="term" value="P:positive regulation of potassium ion transmembrane transport"/>
    <property type="evidence" value="ECO:0007669"/>
    <property type="project" value="UniProtKB-UniRule"/>
</dbReference>
<dbReference type="GO" id="GO:0006813">
    <property type="term" value="P:potassium ion transport"/>
    <property type="evidence" value="ECO:0007669"/>
    <property type="project" value="InterPro"/>
</dbReference>
<dbReference type="FunFam" id="3.40.50.360:FF:000008">
    <property type="entry name" value="Glutathione-regulated potassium-efflux system ancillary protein KefF"/>
    <property type="match status" value="1"/>
</dbReference>
<dbReference type="Gene3D" id="3.40.50.360">
    <property type="match status" value="1"/>
</dbReference>
<dbReference type="HAMAP" id="MF_01414">
    <property type="entry name" value="K_H_efflux_KefF"/>
    <property type="match status" value="1"/>
</dbReference>
<dbReference type="InterPro" id="IPR003680">
    <property type="entry name" value="Flavodoxin_fold"/>
</dbReference>
<dbReference type="InterPro" id="IPR029039">
    <property type="entry name" value="Flavoprotein-like_sf"/>
</dbReference>
<dbReference type="InterPro" id="IPR023948">
    <property type="entry name" value="K_H_efflux_KefF"/>
</dbReference>
<dbReference type="InterPro" id="IPR046980">
    <property type="entry name" value="KefG/KefF"/>
</dbReference>
<dbReference type="NCBIfam" id="NF002044">
    <property type="entry name" value="PRK00871.1"/>
    <property type="match status" value="1"/>
</dbReference>
<dbReference type="PANTHER" id="PTHR47307:SF2">
    <property type="entry name" value="GLUTATHIONE-REGULATED POTASSIUM-EFFLUX SYSTEM ANCILLARY PROTEIN KEFF"/>
    <property type="match status" value="1"/>
</dbReference>
<dbReference type="PANTHER" id="PTHR47307">
    <property type="entry name" value="GLUTATHIONE-REGULATED POTASSIUM-EFFLUX SYSTEM ANCILLARY PROTEIN KEFG"/>
    <property type="match status" value="1"/>
</dbReference>
<dbReference type="Pfam" id="PF02525">
    <property type="entry name" value="Flavodoxin_2"/>
    <property type="match status" value="1"/>
</dbReference>
<dbReference type="SUPFAM" id="SSF52218">
    <property type="entry name" value="Flavoproteins"/>
    <property type="match status" value="1"/>
</dbReference>
<reference key="1">
    <citation type="submission" date="2008-02" db="EMBL/GenBank/DDBJ databases">
        <title>Complete sequence of Escherichia coli C str. ATCC 8739.</title>
        <authorList>
            <person name="Copeland A."/>
            <person name="Lucas S."/>
            <person name="Lapidus A."/>
            <person name="Glavina del Rio T."/>
            <person name="Dalin E."/>
            <person name="Tice H."/>
            <person name="Bruce D."/>
            <person name="Goodwin L."/>
            <person name="Pitluck S."/>
            <person name="Kiss H."/>
            <person name="Brettin T."/>
            <person name="Detter J.C."/>
            <person name="Han C."/>
            <person name="Kuske C.R."/>
            <person name="Schmutz J."/>
            <person name="Larimer F."/>
            <person name="Land M."/>
            <person name="Hauser L."/>
            <person name="Kyrpides N."/>
            <person name="Mikhailova N."/>
            <person name="Ingram L."/>
            <person name="Richardson P."/>
        </authorList>
    </citation>
    <scope>NUCLEOTIDE SEQUENCE [LARGE SCALE GENOMIC DNA]</scope>
    <source>
        <strain>ATCC 8739 / DSM 1576 / NBRC 3972 / NCIMB 8545 / WDCM 00012 / Crooks</strain>
    </source>
</reference>
<feature type="chain" id="PRO_1000087400" description="Glutathione-regulated potassium-efflux system ancillary protein KefF">
    <location>
        <begin position="1"/>
        <end position="176"/>
    </location>
</feature>
<feature type="binding site" evidence="1">
    <location>
        <position position="8"/>
    </location>
    <ligand>
        <name>FMN</name>
        <dbReference type="ChEBI" id="CHEBI:58210"/>
    </ligand>
</feature>
<feature type="binding site" evidence="1">
    <location>
        <begin position="14"/>
        <end position="17"/>
    </location>
    <ligand>
        <name>FMN</name>
        <dbReference type="ChEBI" id="CHEBI:58210"/>
    </ligand>
</feature>
<feature type="binding site" evidence="1">
    <location>
        <begin position="65"/>
        <end position="68"/>
    </location>
    <ligand>
        <name>FMN</name>
        <dbReference type="ChEBI" id="CHEBI:58210"/>
    </ligand>
</feature>
<feature type="binding site" evidence="1">
    <location>
        <begin position="105"/>
        <end position="108"/>
    </location>
    <ligand>
        <name>FMN</name>
        <dbReference type="ChEBI" id="CHEBI:58210"/>
    </ligand>
</feature>
<gene>
    <name evidence="1" type="primary">kefF</name>
    <name type="ordered locus">EcolC_3609</name>
</gene>
<organism>
    <name type="scientific">Escherichia coli (strain ATCC 8739 / DSM 1576 / NBRC 3972 / NCIMB 8545 / WDCM 00012 / Crooks)</name>
    <dbReference type="NCBI Taxonomy" id="481805"/>
    <lineage>
        <taxon>Bacteria</taxon>
        <taxon>Pseudomonadati</taxon>
        <taxon>Pseudomonadota</taxon>
        <taxon>Gammaproteobacteria</taxon>
        <taxon>Enterobacterales</taxon>
        <taxon>Enterobacteriaceae</taxon>
        <taxon>Escherichia</taxon>
    </lineage>
</organism>
<comment type="function">
    <text evidence="1">Regulatory subunit of a potassium efflux system that confers protection against electrophiles. Required for full activity of KefC. Shows redox enzymatic activity, but this enzymatic activity is not required for activation of KefC.</text>
</comment>
<comment type="catalytic activity">
    <reaction evidence="1">
        <text>a quinone + NADH + H(+) = a quinol + NAD(+)</text>
        <dbReference type="Rhea" id="RHEA:46160"/>
        <dbReference type="ChEBI" id="CHEBI:15378"/>
        <dbReference type="ChEBI" id="CHEBI:24646"/>
        <dbReference type="ChEBI" id="CHEBI:57540"/>
        <dbReference type="ChEBI" id="CHEBI:57945"/>
        <dbReference type="ChEBI" id="CHEBI:132124"/>
        <dbReference type="EC" id="1.6.5.2"/>
    </reaction>
</comment>
<comment type="catalytic activity">
    <reaction evidence="1">
        <text>a quinone + NADPH + H(+) = a quinol + NADP(+)</text>
        <dbReference type="Rhea" id="RHEA:46164"/>
        <dbReference type="ChEBI" id="CHEBI:15378"/>
        <dbReference type="ChEBI" id="CHEBI:24646"/>
        <dbReference type="ChEBI" id="CHEBI:57783"/>
        <dbReference type="ChEBI" id="CHEBI:58349"/>
        <dbReference type="ChEBI" id="CHEBI:132124"/>
        <dbReference type="EC" id="1.6.5.2"/>
    </reaction>
</comment>
<comment type="cofactor">
    <cofactor evidence="1">
        <name>FMN</name>
        <dbReference type="ChEBI" id="CHEBI:58210"/>
    </cofactor>
</comment>
<comment type="subunit">
    <text evidence="1">Homodimer. Interacts with KefC.</text>
</comment>
<comment type="subcellular location">
    <subcellularLocation>
        <location evidence="1">Cell inner membrane</location>
        <topology evidence="1">Peripheral membrane protein</topology>
        <orientation evidence="1">Cytoplasmic side</orientation>
    </subcellularLocation>
</comment>
<comment type="similarity">
    <text evidence="1">Belongs to the NAD(P)H dehydrogenase (quinone) family. KefF subfamily.</text>
</comment>